<dbReference type="EC" id="2.5.1.61"/>
<dbReference type="EMBL" id="X63207">
    <property type="protein sequence ID" value="CAA44890.1"/>
    <property type="molecule type" value="Genomic_DNA"/>
</dbReference>
<dbReference type="PIR" id="S23698">
    <property type="entry name" value="S23698"/>
</dbReference>
<dbReference type="UniPathway" id="UPA00251">
    <property type="reaction ID" value="UER00319"/>
</dbReference>
<dbReference type="GO" id="GO:0005737">
    <property type="term" value="C:cytoplasm"/>
    <property type="evidence" value="ECO:0007669"/>
    <property type="project" value="TreeGrafter"/>
</dbReference>
<dbReference type="GO" id="GO:0004418">
    <property type="term" value="F:hydroxymethylbilane synthase activity"/>
    <property type="evidence" value="ECO:0007669"/>
    <property type="project" value="UniProtKB-EC"/>
</dbReference>
<dbReference type="GO" id="GO:0006782">
    <property type="term" value="P:protoporphyrinogen IX biosynthetic process"/>
    <property type="evidence" value="ECO:0007669"/>
    <property type="project" value="UniProtKB-UniPathway"/>
</dbReference>
<dbReference type="FunFam" id="3.40.190.10:FF:000004">
    <property type="entry name" value="Porphobilinogen deaminase"/>
    <property type="match status" value="1"/>
</dbReference>
<dbReference type="Gene3D" id="3.40.190.10">
    <property type="entry name" value="Periplasmic binding protein-like II"/>
    <property type="match status" value="1"/>
</dbReference>
<dbReference type="InterPro" id="IPR000860">
    <property type="entry name" value="HemC"/>
</dbReference>
<dbReference type="InterPro" id="IPR022417">
    <property type="entry name" value="Porphobilin_deaminase_N"/>
</dbReference>
<dbReference type="PANTHER" id="PTHR11557">
    <property type="entry name" value="PORPHOBILINOGEN DEAMINASE"/>
    <property type="match status" value="1"/>
</dbReference>
<dbReference type="PANTHER" id="PTHR11557:SF0">
    <property type="entry name" value="PORPHOBILINOGEN DEAMINASE"/>
    <property type="match status" value="1"/>
</dbReference>
<dbReference type="Pfam" id="PF01379">
    <property type="entry name" value="Porphobil_deam"/>
    <property type="match status" value="1"/>
</dbReference>
<dbReference type="PRINTS" id="PR00151">
    <property type="entry name" value="PORPHBDMNASE"/>
</dbReference>
<dbReference type="SUPFAM" id="SSF53850">
    <property type="entry name" value="Periplasmic binding protein-like II"/>
    <property type="match status" value="1"/>
</dbReference>
<name>HEM3_DICCH</name>
<reference key="1">
    <citation type="journal article" date="1988" name="Second Messengers Phosphoproteins">
        <title>Structure and evolution of bacterial adenylate cyclase: comparison between Escherichia coli and Erwinia chrysanthemi.</title>
        <authorList>
            <person name="Danchin A."/>
            <person name="Lenzen G."/>
        </authorList>
    </citation>
    <scope>NUCLEOTIDE SEQUENCE [GENOMIC DNA]</scope>
    <source>
        <strain>B374</strain>
    </source>
</reference>
<accession>P40129</accession>
<keyword id="KW-0627">Porphyrin biosynthesis</keyword>
<keyword id="KW-0808">Transferase</keyword>
<proteinExistence type="inferred from homology"/>
<feature type="chain" id="PRO_0000142937" description="Porphobilinogen deaminase">
    <location>
        <begin position="1"/>
        <end position="89" status="greater than"/>
    </location>
</feature>
<feature type="non-terminal residue">
    <location>
        <position position="89"/>
    </location>
</feature>
<evidence type="ECO:0000250" key="1"/>
<evidence type="ECO:0000305" key="2"/>
<gene>
    <name type="primary">hemC</name>
</gene>
<organism>
    <name type="scientific">Dickeya chrysanthemi</name>
    <name type="common">Pectobacterium chrysanthemi</name>
    <name type="synonym">Erwinia chrysanthemi</name>
    <dbReference type="NCBI Taxonomy" id="556"/>
    <lineage>
        <taxon>Bacteria</taxon>
        <taxon>Pseudomonadati</taxon>
        <taxon>Pseudomonadota</taxon>
        <taxon>Gammaproteobacteria</taxon>
        <taxon>Enterobacterales</taxon>
        <taxon>Pectobacteriaceae</taxon>
        <taxon>Dickeya</taxon>
    </lineage>
</organism>
<sequence length="89" mass="9923">MVDTILRIATRQSPLALWQAHFVQQRLEACHPGLRVELVPMVTRGXLLLDTPLAKVGGKGLFVKELELALLENRADIAVHSMKDVPVEF</sequence>
<protein>
    <recommendedName>
        <fullName>Porphobilinogen deaminase</fullName>
        <shortName>PBG</shortName>
        <ecNumber>2.5.1.61</ecNumber>
    </recommendedName>
    <alternativeName>
        <fullName>Hydroxymethylbilane synthase</fullName>
        <shortName>HMBS</shortName>
    </alternativeName>
    <alternativeName>
        <fullName>Pre-uroporphyrinogen synthase</fullName>
    </alternativeName>
</protein>
<comment type="function">
    <text evidence="1">Tetrapolymerization of the monopyrrole PBG into the hydroxymethylbilane pre-uroporphyrinogen in several discrete steps.</text>
</comment>
<comment type="catalytic activity">
    <reaction>
        <text>4 porphobilinogen + H2O = hydroxymethylbilane + 4 NH4(+)</text>
        <dbReference type="Rhea" id="RHEA:13185"/>
        <dbReference type="ChEBI" id="CHEBI:15377"/>
        <dbReference type="ChEBI" id="CHEBI:28938"/>
        <dbReference type="ChEBI" id="CHEBI:57845"/>
        <dbReference type="ChEBI" id="CHEBI:58126"/>
        <dbReference type="EC" id="2.5.1.61"/>
    </reaction>
</comment>
<comment type="cofactor">
    <cofactor>
        <name>dipyrromethane</name>
        <dbReference type="ChEBI" id="CHEBI:60342"/>
    </cofactor>
    <text>Binds 1 dipyrromethane group covalently.</text>
</comment>
<comment type="pathway">
    <text>Porphyrin-containing compound metabolism; protoporphyrin-IX biosynthesis; coproporphyrinogen-III from 5-aminolevulinate: step 2/4.</text>
</comment>
<comment type="subunit">
    <text evidence="1">Monomer.</text>
</comment>
<comment type="miscellaneous">
    <text evidence="1">The porphobilinogen subunits are added to the dipyrromethane group.</text>
</comment>
<comment type="similarity">
    <text evidence="2">Belongs to the HMBS family.</text>
</comment>